<evidence type="ECO:0000250" key="1">
    <source>
        <dbReference type="UniProtKB" id="P00883"/>
    </source>
</evidence>
<evidence type="ECO:0000250" key="2">
    <source>
        <dbReference type="UniProtKB" id="Q9SJQ9"/>
    </source>
</evidence>
<evidence type="ECO:0000255" key="3"/>
<evidence type="ECO:0000269" key="4">
    <source>
    </source>
</evidence>
<evidence type="ECO:0000269" key="5">
    <source>
    </source>
</evidence>
<evidence type="ECO:0000269" key="6">
    <source>
    </source>
</evidence>
<evidence type="ECO:0000269" key="7">
    <source>
    </source>
</evidence>
<evidence type="ECO:0000269" key="8">
    <source>
    </source>
</evidence>
<evidence type="ECO:0000303" key="9">
    <source>
    </source>
</evidence>
<evidence type="ECO:0000305" key="10"/>
<evidence type="ECO:0007744" key="11">
    <source>
    </source>
</evidence>
<comment type="function">
    <text evidence="2">Plays a key role in glycolysis and gluconeogenesis.</text>
</comment>
<comment type="catalytic activity">
    <reaction evidence="2">
        <text>beta-D-fructose 1,6-bisphosphate = D-glyceraldehyde 3-phosphate + dihydroxyacetone phosphate</text>
        <dbReference type="Rhea" id="RHEA:14729"/>
        <dbReference type="ChEBI" id="CHEBI:32966"/>
        <dbReference type="ChEBI" id="CHEBI:57642"/>
        <dbReference type="ChEBI" id="CHEBI:59776"/>
        <dbReference type="EC" id="4.1.2.13"/>
    </reaction>
</comment>
<comment type="biophysicochemical properties">
    <kinetics>
        <KM evidence="7">35 uM for fructose-bisphosphate for the cleavage reaction</KM>
        <Vmax evidence="7">13.0 umol/min/mg enzyme with fructose-bisphosphate as substrate</Vmax>
    </kinetics>
</comment>
<comment type="pathway">
    <text evidence="10">Carbohydrate degradation; glycolysis; D-glyceraldehyde 3-phosphate and glycerone phosphate from D-glucose: step 4/4.</text>
</comment>
<comment type="subunit">
    <text evidence="7">Homotetramer.</text>
</comment>
<comment type="subcellular location">
    <subcellularLocation>
        <location evidence="4 5">Plastid</location>
        <location evidence="4 5">Chloroplast</location>
        <location evidence="4 5">Plastoglobule</location>
    </subcellularLocation>
    <subcellularLocation>
        <location evidence="4">Plastid</location>
        <location evidence="4">Chloroplast stroma</location>
    </subcellularLocation>
</comment>
<comment type="alternative products">
    <event type="alternative splicing"/>
    <isoform>
        <id>Q944G9-1</id>
        <name>1</name>
        <sequence type="displayed"/>
    </isoform>
    <text>A number of isoforms are produced. According to EST sequences.</text>
</comment>
<comment type="tissue specificity">
    <text evidence="8">Highly expressed in rosettes leaves.</text>
</comment>
<comment type="induction">
    <text evidence="8">By glucose and sucrose (PubMed:22561114). Induced by drought stress (PubMed:22561114).</text>
</comment>
<comment type="PTM">
    <text evidence="7">Can be trimethylated at Lys-394 by LSMT-L. The methylation level has no influence on the ologomerization state or on the kinetic properties of the enzyme.</text>
</comment>
<comment type="PTM">
    <text evidence="6">Phosphorylated on tyrosine residues in response to abscisic acid (ABA) in germinating seeds.</text>
</comment>
<comment type="disruption phenotype">
    <text evidence="8">Reduced growth rate. Unability to accumulate starch in leaves during daylight.</text>
</comment>
<comment type="similarity">
    <text evidence="10">Belongs to the class I fructose-bisphosphate aldolase family.</text>
</comment>
<comment type="sequence caution" evidence="10">
    <conflict type="erroneous gene model prediction">
        <sequence resource="EMBL-CDS" id="CAB38817"/>
    </conflict>
</comment>
<comment type="sequence caution" evidence="10">
    <conflict type="erroneous gene model prediction">
        <sequence resource="EMBL-CDS" id="CAB80560"/>
    </conflict>
</comment>
<reference key="1">
    <citation type="journal article" date="1999" name="Nature">
        <title>Sequence and analysis of chromosome 4 of the plant Arabidopsis thaliana.</title>
        <authorList>
            <person name="Mayer K.F.X."/>
            <person name="Schueller C."/>
            <person name="Wambutt R."/>
            <person name="Murphy G."/>
            <person name="Volckaert G."/>
            <person name="Pohl T."/>
            <person name="Duesterhoeft A."/>
            <person name="Stiekema W."/>
            <person name="Entian K.-D."/>
            <person name="Terryn N."/>
            <person name="Harris B."/>
            <person name="Ansorge W."/>
            <person name="Brandt P."/>
            <person name="Grivell L.A."/>
            <person name="Rieger M."/>
            <person name="Weichselgartner M."/>
            <person name="de Simone V."/>
            <person name="Obermaier B."/>
            <person name="Mache R."/>
            <person name="Mueller M."/>
            <person name="Kreis M."/>
            <person name="Delseny M."/>
            <person name="Puigdomenech P."/>
            <person name="Watson M."/>
            <person name="Schmidtheini T."/>
            <person name="Reichert B."/>
            <person name="Portetelle D."/>
            <person name="Perez-Alonso M."/>
            <person name="Boutry M."/>
            <person name="Bancroft I."/>
            <person name="Vos P."/>
            <person name="Hoheisel J."/>
            <person name="Zimmermann W."/>
            <person name="Wedler H."/>
            <person name="Ridley P."/>
            <person name="Langham S.-A."/>
            <person name="McCullagh B."/>
            <person name="Bilham L."/>
            <person name="Robben J."/>
            <person name="van der Schueren J."/>
            <person name="Grymonprez B."/>
            <person name="Chuang Y.-J."/>
            <person name="Vandenbussche F."/>
            <person name="Braeken M."/>
            <person name="Weltjens I."/>
            <person name="Voet M."/>
            <person name="Bastiaens I."/>
            <person name="Aert R."/>
            <person name="Defoor E."/>
            <person name="Weitzenegger T."/>
            <person name="Bothe G."/>
            <person name="Ramsperger U."/>
            <person name="Hilbert H."/>
            <person name="Braun M."/>
            <person name="Holzer E."/>
            <person name="Brandt A."/>
            <person name="Peters S."/>
            <person name="van Staveren M."/>
            <person name="Dirkse W."/>
            <person name="Mooijman P."/>
            <person name="Klein Lankhorst R."/>
            <person name="Rose M."/>
            <person name="Hauf J."/>
            <person name="Koetter P."/>
            <person name="Berneiser S."/>
            <person name="Hempel S."/>
            <person name="Feldpausch M."/>
            <person name="Lamberth S."/>
            <person name="Van den Daele H."/>
            <person name="De Keyser A."/>
            <person name="Buysshaert C."/>
            <person name="Gielen J."/>
            <person name="Villarroel R."/>
            <person name="De Clercq R."/>
            <person name="van Montagu M."/>
            <person name="Rogers J."/>
            <person name="Cronin A."/>
            <person name="Quail M.A."/>
            <person name="Bray-Allen S."/>
            <person name="Clark L."/>
            <person name="Doggett J."/>
            <person name="Hall S."/>
            <person name="Kay M."/>
            <person name="Lennard N."/>
            <person name="McLay K."/>
            <person name="Mayes R."/>
            <person name="Pettett A."/>
            <person name="Rajandream M.A."/>
            <person name="Lyne M."/>
            <person name="Benes V."/>
            <person name="Rechmann S."/>
            <person name="Borkova D."/>
            <person name="Bloecker H."/>
            <person name="Scharfe M."/>
            <person name="Grimm M."/>
            <person name="Loehnert T.-H."/>
            <person name="Dose S."/>
            <person name="de Haan M."/>
            <person name="Maarse A.C."/>
            <person name="Schaefer M."/>
            <person name="Mueller-Auer S."/>
            <person name="Gabel C."/>
            <person name="Fuchs M."/>
            <person name="Fartmann B."/>
            <person name="Granderath K."/>
            <person name="Dauner D."/>
            <person name="Herzl A."/>
            <person name="Neumann S."/>
            <person name="Argiriou A."/>
            <person name="Vitale D."/>
            <person name="Liguori R."/>
            <person name="Piravandi E."/>
            <person name="Massenet O."/>
            <person name="Quigley F."/>
            <person name="Clabauld G."/>
            <person name="Muendlein A."/>
            <person name="Felber R."/>
            <person name="Schnabl S."/>
            <person name="Hiller R."/>
            <person name="Schmidt W."/>
            <person name="Lecharny A."/>
            <person name="Aubourg S."/>
            <person name="Chefdor F."/>
            <person name="Cooke R."/>
            <person name="Berger C."/>
            <person name="Monfort A."/>
            <person name="Casacuberta E."/>
            <person name="Gibbons T."/>
            <person name="Weber N."/>
            <person name="Vandenbol M."/>
            <person name="Bargues M."/>
            <person name="Terol J."/>
            <person name="Torres A."/>
            <person name="Perez-Perez A."/>
            <person name="Purnelle B."/>
            <person name="Bent E."/>
            <person name="Johnson S."/>
            <person name="Tacon D."/>
            <person name="Jesse T."/>
            <person name="Heijnen L."/>
            <person name="Schwarz S."/>
            <person name="Scholler P."/>
            <person name="Heber S."/>
            <person name="Francs P."/>
            <person name="Bielke C."/>
            <person name="Frishman D."/>
            <person name="Haase D."/>
            <person name="Lemcke K."/>
            <person name="Mewes H.-W."/>
            <person name="Stocker S."/>
            <person name="Zaccaria P."/>
            <person name="Bevan M."/>
            <person name="Wilson R.K."/>
            <person name="de la Bastide M."/>
            <person name="Habermann K."/>
            <person name="Parnell L."/>
            <person name="Dedhia N."/>
            <person name="Gnoj L."/>
            <person name="Schutz K."/>
            <person name="Huang E."/>
            <person name="Spiegel L."/>
            <person name="Sekhon M."/>
            <person name="Murray J."/>
            <person name="Sheet P."/>
            <person name="Cordes M."/>
            <person name="Abu-Threideh J."/>
            <person name="Stoneking T."/>
            <person name="Kalicki J."/>
            <person name="Graves T."/>
            <person name="Harmon G."/>
            <person name="Edwards J."/>
            <person name="Latreille P."/>
            <person name="Courtney L."/>
            <person name="Cloud J."/>
            <person name="Abbott A."/>
            <person name="Scott K."/>
            <person name="Johnson D."/>
            <person name="Minx P."/>
            <person name="Bentley D."/>
            <person name="Fulton B."/>
            <person name="Miller N."/>
            <person name="Greco T."/>
            <person name="Kemp K."/>
            <person name="Kramer J."/>
            <person name="Fulton L."/>
            <person name="Mardis E."/>
            <person name="Dante M."/>
            <person name="Pepin K."/>
            <person name="Hillier L.W."/>
            <person name="Nelson J."/>
            <person name="Spieth J."/>
            <person name="Ryan E."/>
            <person name="Andrews S."/>
            <person name="Geisel C."/>
            <person name="Layman D."/>
            <person name="Du H."/>
            <person name="Ali J."/>
            <person name="Berghoff A."/>
            <person name="Jones K."/>
            <person name="Drone K."/>
            <person name="Cotton M."/>
            <person name="Joshu C."/>
            <person name="Antonoiu B."/>
            <person name="Zidanic M."/>
            <person name="Strong C."/>
            <person name="Sun H."/>
            <person name="Lamar B."/>
            <person name="Yordan C."/>
            <person name="Ma P."/>
            <person name="Zhong J."/>
            <person name="Preston R."/>
            <person name="Vil D."/>
            <person name="Shekher M."/>
            <person name="Matero A."/>
            <person name="Shah R."/>
            <person name="Swaby I.K."/>
            <person name="O'Shaughnessy A."/>
            <person name="Rodriguez M."/>
            <person name="Hoffman J."/>
            <person name="Till S."/>
            <person name="Granat S."/>
            <person name="Shohdy N."/>
            <person name="Hasegawa A."/>
            <person name="Hameed A."/>
            <person name="Lodhi M."/>
            <person name="Johnson A."/>
            <person name="Chen E."/>
            <person name="Marra M.A."/>
            <person name="Martienssen R."/>
            <person name="McCombie W.R."/>
        </authorList>
    </citation>
    <scope>NUCLEOTIDE SEQUENCE [LARGE SCALE GENOMIC DNA]</scope>
    <source>
        <strain>cv. Columbia</strain>
    </source>
</reference>
<reference key="2">
    <citation type="journal article" date="2017" name="Plant J.">
        <title>Araport11: a complete reannotation of the Arabidopsis thaliana reference genome.</title>
        <authorList>
            <person name="Cheng C.Y."/>
            <person name="Krishnakumar V."/>
            <person name="Chan A.P."/>
            <person name="Thibaud-Nissen F."/>
            <person name="Schobel S."/>
            <person name="Town C.D."/>
        </authorList>
    </citation>
    <scope>GENOME REANNOTATION</scope>
    <source>
        <strain>cv. Columbia</strain>
    </source>
</reference>
<reference key="3">
    <citation type="journal article" date="2003" name="Science">
        <title>Empirical analysis of transcriptional activity in the Arabidopsis genome.</title>
        <authorList>
            <person name="Yamada K."/>
            <person name="Lim J."/>
            <person name="Dale J.M."/>
            <person name="Chen H."/>
            <person name="Shinn P."/>
            <person name="Palm C.J."/>
            <person name="Southwick A.M."/>
            <person name="Wu H.C."/>
            <person name="Kim C.J."/>
            <person name="Nguyen M."/>
            <person name="Pham P.K."/>
            <person name="Cheuk R.F."/>
            <person name="Karlin-Newmann G."/>
            <person name="Liu S.X."/>
            <person name="Lam B."/>
            <person name="Sakano H."/>
            <person name="Wu T."/>
            <person name="Yu G."/>
            <person name="Miranda M."/>
            <person name="Quach H.L."/>
            <person name="Tripp M."/>
            <person name="Chang C.H."/>
            <person name="Lee J.M."/>
            <person name="Toriumi M.J."/>
            <person name="Chan M.M."/>
            <person name="Tang C.C."/>
            <person name="Onodera C.S."/>
            <person name="Deng J.M."/>
            <person name="Akiyama K."/>
            <person name="Ansari Y."/>
            <person name="Arakawa T."/>
            <person name="Banh J."/>
            <person name="Banno F."/>
            <person name="Bowser L."/>
            <person name="Brooks S.Y."/>
            <person name="Carninci P."/>
            <person name="Chao Q."/>
            <person name="Choy N."/>
            <person name="Enju A."/>
            <person name="Goldsmith A.D."/>
            <person name="Gurjal M."/>
            <person name="Hansen N.F."/>
            <person name="Hayashizaki Y."/>
            <person name="Johnson-Hopson C."/>
            <person name="Hsuan V.W."/>
            <person name="Iida K."/>
            <person name="Karnes M."/>
            <person name="Khan S."/>
            <person name="Koesema E."/>
            <person name="Ishida J."/>
            <person name="Jiang P.X."/>
            <person name="Jones T."/>
            <person name="Kawai J."/>
            <person name="Kamiya A."/>
            <person name="Meyers C."/>
            <person name="Nakajima M."/>
            <person name="Narusaka M."/>
            <person name="Seki M."/>
            <person name="Sakurai T."/>
            <person name="Satou M."/>
            <person name="Tamse R."/>
            <person name="Vaysberg M."/>
            <person name="Wallender E.K."/>
            <person name="Wong C."/>
            <person name="Yamamura Y."/>
            <person name="Yuan S."/>
            <person name="Shinozaki K."/>
            <person name="Davis R.W."/>
            <person name="Theologis A."/>
            <person name="Ecker J.R."/>
        </authorList>
    </citation>
    <scope>NUCLEOTIDE SEQUENCE [LARGE SCALE MRNA]</scope>
    <source>
        <strain>cv. Columbia</strain>
    </source>
</reference>
<reference key="4">
    <citation type="submission" date="2004-10" db="EMBL/GenBank/DDBJ databases">
        <title>Arabidopsis ORF clones.</title>
        <authorList>
            <person name="Kim C.J."/>
            <person name="Chen H."/>
            <person name="Cheuk R.F."/>
            <person name="Shinn P."/>
            <person name="Ecker J.R."/>
        </authorList>
    </citation>
    <scope>NUCLEOTIDE SEQUENCE [LARGE SCALE MRNA]</scope>
    <source>
        <strain>cv. Columbia</strain>
    </source>
</reference>
<reference key="5">
    <citation type="submission" date="2006-07" db="EMBL/GenBank/DDBJ databases">
        <title>Large-scale analysis of RIKEN Arabidopsis full-length (RAFL) cDNAs.</title>
        <authorList>
            <person name="Totoki Y."/>
            <person name="Seki M."/>
            <person name="Ishida J."/>
            <person name="Nakajima M."/>
            <person name="Enju A."/>
            <person name="Kamiya A."/>
            <person name="Narusaka M."/>
            <person name="Shin-i T."/>
            <person name="Nakagawa M."/>
            <person name="Sakamoto N."/>
            <person name="Oishi K."/>
            <person name="Kohara Y."/>
            <person name="Kobayashi M."/>
            <person name="Toyoda A."/>
            <person name="Sakaki Y."/>
            <person name="Sakurai T."/>
            <person name="Iida K."/>
            <person name="Akiyama K."/>
            <person name="Satou M."/>
            <person name="Toyoda T."/>
            <person name="Konagaya A."/>
            <person name="Carninci P."/>
            <person name="Kawai J."/>
            <person name="Hayashizaki Y."/>
            <person name="Shinozaki K."/>
        </authorList>
    </citation>
    <scope>NUCLEOTIDE SEQUENCE [LARGE SCALE MRNA]</scope>
    <source>
        <strain>cv. Columbia</strain>
    </source>
</reference>
<reference key="6">
    <citation type="journal article" date="2006" name="J. Biol. Chem.">
        <title>Tocopherol cyclase (VTE1) localization and vitamin E accumulation in chloroplast plastoglobule lipoprotein particles.</title>
        <authorList>
            <person name="Vidi P.-A."/>
            <person name="Kanwischer M."/>
            <person name="Baginsky S."/>
            <person name="Austin J.R."/>
            <person name="Csucs G."/>
            <person name="Doermann P."/>
            <person name="Kessler F."/>
            <person name="Brehelin C."/>
        </authorList>
    </citation>
    <scope>SUBCELLULAR LOCATION</scope>
    <source>
        <strain>cv. Col-2</strain>
    </source>
</reference>
<reference key="7">
    <citation type="journal article" date="2006" name="Plant Physiol.">
        <title>Protein profiling of plastoglobules in chloroplasts and chromoplasts. A surprising site for differential accumulation of metabolic enzymes.</title>
        <authorList>
            <person name="Ytterberg A.J."/>
            <person name="Peltier J.-B."/>
            <person name="van Wijk K.J."/>
        </authorList>
    </citation>
    <scope>IDENTIFICATION BY MASS SPECTROMETRY</scope>
    <scope>SUBCELLULAR LOCATION [LARGE SCALE ANALYSIS]</scope>
    <source>
        <strain>cv. Columbia</strain>
    </source>
</reference>
<reference key="8">
    <citation type="journal article" date="2008" name="Plant Physiol.">
        <title>Protein tyrosine kinases and protein tyrosine phosphatases are involved in abscisic acid-dependent processes in Arabidopsis seeds and suspension cells.</title>
        <authorList>
            <person name="Ghelis T."/>
            <person name="Bolbach G."/>
            <person name="Clodic G."/>
            <person name="Habricot Y."/>
            <person name="Miginiac E."/>
            <person name="Sotta B."/>
            <person name="Jeannette E."/>
        </authorList>
    </citation>
    <scope>PHOSPHORYLATION</scope>
</reference>
<reference key="9">
    <citation type="journal article" date="2012" name="Gene">
        <title>Identification and characterization of fructose 1,6-bisphosphate aldolase genes in Arabidopsis reveal a gene family with diverse responses to abiotic stresses.</title>
        <authorList>
            <person name="Lu W."/>
            <person name="Tang X."/>
            <person name="Huo Y."/>
            <person name="Xu R."/>
            <person name="Qi S."/>
            <person name="Huang J."/>
            <person name="Zheng C."/>
            <person name="Wu C.A."/>
        </authorList>
    </citation>
    <scope>TISSUE SPECIFICITY</scope>
    <scope>INDUCTION</scope>
    <scope>GENE FAMILY</scope>
    <scope>NOMENCLATURE</scope>
    <scope>DISRUPTION PHENOTYPE</scope>
</reference>
<reference key="10">
    <citation type="journal article" date="2012" name="J. Biol. Chem.">
        <title>Characterization of chloroplastic fructose 1,6-bisphosphate aldolases as lysine-methylated proteins in plants.</title>
        <authorList>
            <person name="Mininno M."/>
            <person name="Brugiere S."/>
            <person name="Pautre V."/>
            <person name="Gilgen A."/>
            <person name="Ma S."/>
            <person name="Ferro M."/>
            <person name="Tardif M."/>
            <person name="Alban C."/>
            <person name="Ravanel S."/>
        </authorList>
    </citation>
    <scope>METHYLATION AT LYS-394</scope>
    <scope>MUTAGENESIS OF LYS-394</scope>
    <scope>CATALYTIC ACTIVITY</scope>
    <scope>SUBUNIT</scope>
    <scope>BIOPHYSICOCHEMICAL PROPERTIES</scope>
</reference>
<reference key="11">
    <citation type="journal article" date="2012" name="J. Proteome Res.">
        <title>Identification of phosphoproteins in Arabidopsis thaliana leaves using polyethylene glycol fractionation, immobilized metal-ion affinity chromatography, two-dimensional gel electrophoresis and mass spectrometry.</title>
        <authorList>
            <person name="Aryal U.K."/>
            <person name="Krochko J.E."/>
            <person name="Ross A.R."/>
        </authorList>
    </citation>
    <scope>PHOSPHORYLATION [LARGE SCALE ANALYSIS] AT SER-157 AND SER-215</scope>
    <scope>IDENTIFICATION BY MASS SPECTROMETRY [LARGE SCALE ANALYSIS]</scope>
</reference>
<gene>
    <name evidence="9" type="primary">FBA2</name>
    <name type="ordered locus">At4g38970</name>
    <name type="ORF">F19H22.70</name>
</gene>
<proteinExistence type="evidence at protein level"/>
<keyword id="KW-0025">Alternative splicing</keyword>
<keyword id="KW-0150">Chloroplast</keyword>
<keyword id="KW-0324">Glycolysis</keyword>
<keyword id="KW-0456">Lyase</keyword>
<keyword id="KW-0488">Methylation</keyword>
<keyword id="KW-0597">Phosphoprotein</keyword>
<keyword id="KW-0934">Plastid</keyword>
<keyword id="KW-1185">Reference proteome</keyword>
<keyword id="KW-0704">Schiff base</keyword>
<keyword id="KW-0809">Transit peptide</keyword>
<organism>
    <name type="scientific">Arabidopsis thaliana</name>
    <name type="common">Mouse-ear cress</name>
    <dbReference type="NCBI Taxonomy" id="3702"/>
    <lineage>
        <taxon>Eukaryota</taxon>
        <taxon>Viridiplantae</taxon>
        <taxon>Streptophyta</taxon>
        <taxon>Embryophyta</taxon>
        <taxon>Tracheophyta</taxon>
        <taxon>Spermatophyta</taxon>
        <taxon>Magnoliopsida</taxon>
        <taxon>eudicotyledons</taxon>
        <taxon>Gunneridae</taxon>
        <taxon>Pentapetalae</taxon>
        <taxon>rosids</taxon>
        <taxon>malvids</taxon>
        <taxon>Brassicales</taxon>
        <taxon>Brassicaceae</taxon>
        <taxon>Camelineae</taxon>
        <taxon>Arabidopsis</taxon>
    </lineage>
</organism>
<dbReference type="EC" id="4.1.2.13" evidence="10"/>
<dbReference type="EMBL" id="AL035679">
    <property type="protein sequence ID" value="CAB38817.1"/>
    <property type="status" value="ALT_SEQ"/>
    <property type="molecule type" value="Genomic_DNA"/>
</dbReference>
<dbReference type="EMBL" id="AL161594">
    <property type="protein sequence ID" value="CAB80560.1"/>
    <property type="status" value="ALT_SEQ"/>
    <property type="molecule type" value="Genomic_DNA"/>
</dbReference>
<dbReference type="EMBL" id="CP002687">
    <property type="protein sequence ID" value="AEE87002.1"/>
    <property type="molecule type" value="Genomic_DNA"/>
</dbReference>
<dbReference type="EMBL" id="AF428455">
    <property type="protein sequence ID" value="AAL16224.1"/>
    <property type="molecule type" value="mRNA"/>
</dbReference>
<dbReference type="EMBL" id="BT015870">
    <property type="protein sequence ID" value="AAU94433.1"/>
    <property type="molecule type" value="mRNA"/>
</dbReference>
<dbReference type="EMBL" id="AK226247">
    <property type="protein sequence ID" value="BAE98409.1"/>
    <property type="molecule type" value="mRNA"/>
</dbReference>
<dbReference type="PIR" id="T06057">
    <property type="entry name" value="T06057"/>
</dbReference>
<dbReference type="RefSeq" id="NP_568049.1">
    <molecule id="Q944G9-1"/>
    <property type="nucleotide sequence ID" value="NM_120057.4"/>
</dbReference>
<dbReference type="SMR" id="Q944G9"/>
<dbReference type="BioGRID" id="15332">
    <property type="interactions" value="5"/>
</dbReference>
<dbReference type="FunCoup" id="Q944G9">
    <property type="interactions" value="1087"/>
</dbReference>
<dbReference type="STRING" id="3702.Q944G9"/>
<dbReference type="GlyGen" id="Q944G9">
    <property type="glycosylation" value="1 site"/>
</dbReference>
<dbReference type="iPTMnet" id="Q944G9"/>
<dbReference type="PaxDb" id="3702-AT4G38970.1"/>
<dbReference type="ProteomicsDB" id="244954">
    <molecule id="Q944G9-1"/>
</dbReference>
<dbReference type="EnsemblPlants" id="AT4G38970.1">
    <molecule id="Q944G9-1"/>
    <property type="protein sequence ID" value="AT4G38970.1"/>
    <property type="gene ID" value="AT4G38970"/>
</dbReference>
<dbReference type="GeneID" id="830052"/>
<dbReference type="Gramene" id="AT4G38970.1">
    <molecule id="Q944G9-1"/>
    <property type="protein sequence ID" value="AT4G38970.1"/>
    <property type="gene ID" value="AT4G38970"/>
</dbReference>
<dbReference type="KEGG" id="ath:AT4G38970"/>
<dbReference type="Araport" id="AT4G38970"/>
<dbReference type="TAIR" id="AT4G38970">
    <property type="gene designation" value="FBA2"/>
</dbReference>
<dbReference type="eggNOG" id="KOG1557">
    <property type="taxonomic scope" value="Eukaryota"/>
</dbReference>
<dbReference type="HOGENOM" id="CLU_031243_0_0_1"/>
<dbReference type="InParanoid" id="Q944G9"/>
<dbReference type="OMA" id="ERNEPRT"/>
<dbReference type="OrthoDB" id="1034776at2759"/>
<dbReference type="BioCyc" id="ARA:AT4G38970-MONOMER"/>
<dbReference type="UniPathway" id="UPA00109">
    <property type="reaction ID" value="UER00183"/>
</dbReference>
<dbReference type="CD-CODE" id="4299E36E">
    <property type="entry name" value="Nucleolus"/>
</dbReference>
<dbReference type="PRO" id="PR:Q944G9"/>
<dbReference type="Proteomes" id="UP000006548">
    <property type="component" value="Chromosome 4"/>
</dbReference>
<dbReference type="ExpressionAtlas" id="Q944G9">
    <property type="expression patterns" value="baseline and differential"/>
</dbReference>
<dbReference type="GO" id="GO:0048046">
    <property type="term" value="C:apoplast"/>
    <property type="evidence" value="ECO:0007005"/>
    <property type="project" value="TAIR"/>
</dbReference>
<dbReference type="GO" id="GO:0009507">
    <property type="term" value="C:chloroplast"/>
    <property type="evidence" value="ECO:0007005"/>
    <property type="project" value="TAIR"/>
</dbReference>
<dbReference type="GO" id="GO:0009941">
    <property type="term" value="C:chloroplast envelope"/>
    <property type="evidence" value="ECO:0007005"/>
    <property type="project" value="TAIR"/>
</dbReference>
<dbReference type="GO" id="GO:0009570">
    <property type="term" value="C:chloroplast stroma"/>
    <property type="evidence" value="ECO:0007005"/>
    <property type="project" value="TAIR"/>
</dbReference>
<dbReference type="GO" id="GO:0005886">
    <property type="term" value="C:plasma membrane"/>
    <property type="evidence" value="ECO:0007005"/>
    <property type="project" value="TAIR"/>
</dbReference>
<dbReference type="GO" id="GO:0010287">
    <property type="term" value="C:plastoglobule"/>
    <property type="evidence" value="ECO:0007005"/>
    <property type="project" value="TAIR"/>
</dbReference>
<dbReference type="GO" id="GO:0009579">
    <property type="term" value="C:thylakoid"/>
    <property type="evidence" value="ECO:0007005"/>
    <property type="project" value="TAIR"/>
</dbReference>
<dbReference type="GO" id="GO:0004332">
    <property type="term" value="F:fructose-bisphosphate aldolase activity"/>
    <property type="evidence" value="ECO:0000250"/>
    <property type="project" value="UniProtKB"/>
</dbReference>
<dbReference type="GO" id="GO:0003729">
    <property type="term" value="F:mRNA binding"/>
    <property type="evidence" value="ECO:0000314"/>
    <property type="project" value="TAIR"/>
</dbReference>
<dbReference type="GO" id="GO:0006094">
    <property type="term" value="P:gluconeogenesis"/>
    <property type="evidence" value="ECO:0000250"/>
    <property type="project" value="UniProtKB"/>
</dbReference>
<dbReference type="GO" id="GO:0006096">
    <property type="term" value="P:glycolytic process"/>
    <property type="evidence" value="ECO:0000250"/>
    <property type="project" value="UniProtKB"/>
</dbReference>
<dbReference type="GO" id="GO:0009737">
    <property type="term" value="P:response to abscisic acid"/>
    <property type="evidence" value="ECO:0000270"/>
    <property type="project" value="TAIR"/>
</dbReference>
<dbReference type="CDD" id="cd00948">
    <property type="entry name" value="FBP_aldolase_I_a"/>
    <property type="match status" value="1"/>
</dbReference>
<dbReference type="FunFam" id="3.20.20.70:FF:000052">
    <property type="entry name" value="Fructose-bisphosphate aldolase"/>
    <property type="match status" value="1"/>
</dbReference>
<dbReference type="Gene3D" id="3.20.20.70">
    <property type="entry name" value="Aldolase class I"/>
    <property type="match status" value="1"/>
</dbReference>
<dbReference type="InterPro" id="IPR029768">
    <property type="entry name" value="Aldolase_I_AS"/>
</dbReference>
<dbReference type="InterPro" id="IPR013785">
    <property type="entry name" value="Aldolase_TIM"/>
</dbReference>
<dbReference type="InterPro" id="IPR000741">
    <property type="entry name" value="FBA_I"/>
</dbReference>
<dbReference type="NCBIfam" id="NF033379">
    <property type="entry name" value="FrucBisAld_I"/>
    <property type="match status" value="1"/>
</dbReference>
<dbReference type="PANTHER" id="PTHR11627">
    <property type="entry name" value="FRUCTOSE-BISPHOSPHATE ALDOLASE"/>
    <property type="match status" value="1"/>
</dbReference>
<dbReference type="Pfam" id="PF00274">
    <property type="entry name" value="Glycolytic"/>
    <property type="match status" value="1"/>
</dbReference>
<dbReference type="SUPFAM" id="SSF51569">
    <property type="entry name" value="Aldolase"/>
    <property type="match status" value="1"/>
</dbReference>
<dbReference type="PROSITE" id="PS00158">
    <property type="entry name" value="ALDOLASE_CLASS_I"/>
    <property type="match status" value="1"/>
</dbReference>
<protein>
    <recommendedName>
        <fullName evidence="10">Fructose-bisphosphate aldolase 2, chloroplastic</fullName>
        <shortName evidence="9">AtFBA2</shortName>
        <ecNumber evidence="10">4.1.2.13</ecNumber>
    </recommendedName>
</protein>
<name>ALFP2_ARATH</name>
<feature type="transit peptide" description="Chloroplast" evidence="3">
    <location>
        <begin position="1"/>
        <end position="46"/>
    </location>
</feature>
<feature type="chain" id="PRO_0000286527" description="Fructose-bisphosphate aldolase 2, chloroplastic">
    <location>
        <begin position="47"/>
        <end position="398"/>
    </location>
</feature>
<feature type="active site" description="Proton acceptor" evidence="1">
    <location>
        <position position="225"/>
    </location>
</feature>
<feature type="active site" description="Schiff-base intermediate with dihydroxyacetone-P" evidence="1">
    <location>
        <position position="267"/>
    </location>
</feature>
<feature type="binding site" evidence="1">
    <location>
        <position position="95"/>
    </location>
    <ligand>
        <name>substrate</name>
    </ligand>
</feature>
<feature type="binding site" evidence="1">
    <location>
        <position position="185"/>
    </location>
    <ligand>
        <name>substrate</name>
    </ligand>
</feature>
<feature type="binding site" evidence="1">
    <location>
        <begin position="309"/>
        <end position="311"/>
    </location>
    <ligand>
        <name>substrate</name>
    </ligand>
</feature>
<feature type="site" description="Necessary for preference for fructose 1,6-bisphosphate over fructose 1-phosphate" evidence="1">
    <location>
        <position position="398"/>
    </location>
</feature>
<feature type="modified residue" description="Phosphoserine" evidence="11">
    <location>
        <position position="157"/>
    </location>
</feature>
<feature type="modified residue" description="Phosphoserine" evidence="11">
    <location>
        <position position="215"/>
    </location>
</feature>
<feature type="modified residue" description="N6,N6,N6-trimethyllysine" evidence="7">
    <location>
        <position position="394"/>
    </location>
</feature>
<feature type="mutagenesis site" description="Loss of methylation, but no effect on enzyme activity." evidence="7">
    <original>K</original>
    <variation>A</variation>
    <location>
        <position position="394"/>
    </location>
</feature>
<feature type="sequence conflict" description="In Ref. 3; AAL16224." evidence="10" ref="3">
    <original>C</original>
    <variation>G</variation>
    <location>
        <position position="163"/>
    </location>
</feature>
<sequence length="398" mass="42988">MASTSLLKASPVLDKSEWVKGQSVLFRQPSSASVVLRNRATSLTVRAASSYADELVKTAKTIASPGRGILAMDESNATCGKRLDSIGLENTEANRQAFRTLLVSAPGLGQYVSGAILFEETLYQSTTEGKKMVDVLVEQNIVPGIKVDKGLVPLVGSNNESWCQGLDGLSSRTAAYYQQGARFAKWRTVVSIPNGPSALAVKEAAWGLARYAAISQDSGLVPIVEPEILLDGEHDIDRTYDVAEKVWAEVFFYLAQNNVMFEGILLKPSMVTPGAESKDRATPEQVAAYTLKLLRNRVPPAVPGIMFLSGGQSEVEATLNLNAMNQAPNPWHVSFSYARALQNTCLKTWGGRPENVNAAQTTLLARAKANSLAQLGKYTGEGESEEAKEGMFVKGYTY</sequence>
<accession>Q944G9</accession>
<accession>Q5XEU6</accession>
<accession>Q9SVJ6</accession>